<organism>
    <name type="scientific">Pyricularia oryzae (strain 70-15 / ATCC MYA-4617 / FGSC 8958)</name>
    <name type="common">Rice blast fungus</name>
    <name type="synonym">Magnaporthe oryzae</name>
    <dbReference type="NCBI Taxonomy" id="242507"/>
    <lineage>
        <taxon>Eukaryota</taxon>
        <taxon>Fungi</taxon>
        <taxon>Dikarya</taxon>
        <taxon>Ascomycota</taxon>
        <taxon>Pezizomycotina</taxon>
        <taxon>Sordariomycetes</taxon>
        <taxon>Sordariomycetidae</taxon>
        <taxon>Magnaporthales</taxon>
        <taxon>Pyriculariaceae</taxon>
        <taxon>Pyricularia</taxon>
    </lineage>
</organism>
<evidence type="ECO:0000250" key="1"/>
<evidence type="ECO:0000305" key="2"/>
<protein>
    <recommendedName>
        <fullName>Probable Xaa-Pro aminopeptidase PEPP</fullName>
        <ecNumber>3.4.11.9</ecNumber>
    </recommendedName>
    <alternativeName>
        <fullName>Aminoacylproline aminopeptidase</fullName>
    </alternativeName>
</protein>
<comment type="function">
    <text evidence="1">Catalyzes the removal of a penultimate prolyl residue from the N-termini of peptides.</text>
</comment>
<comment type="catalytic activity">
    <reaction>
        <text>Release of any N-terminal amino acid, including proline, that is linked to proline, even from a dipeptide or tripeptide.</text>
        <dbReference type="EC" id="3.4.11.9"/>
    </reaction>
</comment>
<comment type="cofactor">
    <cofactor evidence="1">
        <name>Mn(2+)</name>
        <dbReference type="ChEBI" id="CHEBI:29035"/>
    </cofactor>
    <text evidence="1">Binds 2 manganese ions per subunit.</text>
</comment>
<comment type="similarity">
    <text evidence="2">Belongs to the peptidase M24B family.</text>
</comment>
<comment type="sequence caution" evidence="2">
    <conflict type="erroneous initiation">
        <sequence resource="EMBL-CDS" id="EHA51744"/>
    </conflict>
    <text>Extended N-terminus.</text>
</comment>
<sequence>MASKNYDDVLKGKYPAKEHARRVVEVIRSSQPDVSGVLYLEGQKTKMIEDNDSEEHFRQRRYFYYLTGCELPDCYLTYDIATSRSTLYIPPVDPESVIWSGLPMSALEALQKYDVDEVRYTHEVNAALTSLAEAAPSSTVYAIPNQVSDSITFLGFGAKNFDVLKPAIERARVVKSDYEIALIAKANDISGAAHLAVLKRVRHVSNERELYATFLAECISRGAPHMAYHSIVAAGRAAATLHYVKNDEPTAGKLNLLLDAACELNCYASDITRTFPISGSFTPESRAIYDTVLRMQLETLAMLKEGVRWDDVHIHAHRVAIEGLLAAGIFKKGFSVDEILESRTSVAFFPHGLGHYLGMDTHDTGGNANYQDKDSMFRYLRVRGTLPAGSVITVEPGIYFCNFIIEPYLKDEKHSKYIDAAVLDKYWDVGGVRIEDNVVITKDGYDNLTTAVKDAKEMEKIISSS</sequence>
<name>AMPP3_PYRO7</name>
<reference key="1">
    <citation type="journal article" date="2005" name="Nature">
        <title>The genome sequence of the rice blast fungus Magnaporthe grisea.</title>
        <authorList>
            <person name="Dean R.A."/>
            <person name="Talbot N.J."/>
            <person name="Ebbole D.J."/>
            <person name="Farman M.L."/>
            <person name="Mitchell T.K."/>
            <person name="Orbach M.J."/>
            <person name="Thon M.R."/>
            <person name="Kulkarni R."/>
            <person name="Xu J.-R."/>
            <person name="Pan H."/>
            <person name="Read N.D."/>
            <person name="Lee Y.-H."/>
            <person name="Carbone I."/>
            <person name="Brown D."/>
            <person name="Oh Y.Y."/>
            <person name="Donofrio N."/>
            <person name="Jeong J.S."/>
            <person name="Soanes D.M."/>
            <person name="Djonovic S."/>
            <person name="Kolomiets E."/>
            <person name="Rehmeyer C."/>
            <person name="Li W."/>
            <person name="Harding M."/>
            <person name="Kim S."/>
            <person name="Lebrun M.-H."/>
            <person name="Bohnert H."/>
            <person name="Coughlan S."/>
            <person name="Butler J."/>
            <person name="Calvo S.E."/>
            <person name="Ma L.-J."/>
            <person name="Nicol R."/>
            <person name="Purcell S."/>
            <person name="Nusbaum C."/>
            <person name="Galagan J.E."/>
            <person name="Birren B.W."/>
        </authorList>
    </citation>
    <scope>NUCLEOTIDE SEQUENCE [LARGE SCALE GENOMIC DNA]</scope>
    <source>
        <strain>70-15 / ATCC MYA-4617 / FGSC 8958</strain>
    </source>
</reference>
<accession>A4RAE9</accession>
<accession>G4N2Y5</accession>
<feature type="chain" id="PRO_0000411874" description="Probable Xaa-Pro aminopeptidase PEPP">
    <location>
        <begin position="1"/>
        <end position="465"/>
    </location>
</feature>
<feature type="binding site" evidence="1">
    <location>
        <position position="259"/>
    </location>
    <ligand>
        <name>Mn(2+)</name>
        <dbReference type="ChEBI" id="CHEBI:29035"/>
        <label>2</label>
    </ligand>
</feature>
<feature type="binding site" evidence="1">
    <location>
        <position position="270"/>
    </location>
    <ligand>
        <name>Mn(2+)</name>
        <dbReference type="ChEBI" id="CHEBI:29035"/>
        <label>1</label>
    </ligand>
</feature>
<feature type="binding site" evidence="1">
    <location>
        <position position="270"/>
    </location>
    <ligand>
        <name>Mn(2+)</name>
        <dbReference type="ChEBI" id="CHEBI:29035"/>
        <label>2</label>
    </ligand>
</feature>
<feature type="binding site" evidence="1">
    <location>
        <position position="395"/>
    </location>
    <ligand>
        <name>Mn(2+)</name>
        <dbReference type="ChEBI" id="CHEBI:29035"/>
        <label>1</label>
    </ligand>
</feature>
<feature type="binding site" evidence="1">
    <location>
        <position position="435"/>
    </location>
    <ligand>
        <name>Mn(2+)</name>
        <dbReference type="ChEBI" id="CHEBI:29035"/>
        <label>1</label>
    </ligand>
</feature>
<feature type="binding site" evidence="1">
    <location>
        <position position="435"/>
    </location>
    <ligand>
        <name>Mn(2+)</name>
        <dbReference type="ChEBI" id="CHEBI:29035"/>
        <label>2</label>
    </ligand>
</feature>
<keyword id="KW-0031">Aminopeptidase</keyword>
<keyword id="KW-0378">Hydrolase</keyword>
<keyword id="KW-0464">Manganese</keyword>
<keyword id="KW-0479">Metal-binding</keyword>
<keyword id="KW-0482">Metalloprotease</keyword>
<keyword id="KW-0645">Protease</keyword>
<keyword id="KW-1185">Reference proteome</keyword>
<gene>
    <name type="primary">PEPP</name>
    <name type="ORF">MGG_13438</name>
</gene>
<proteinExistence type="inferred from homology"/>
<dbReference type="EC" id="3.4.11.9"/>
<dbReference type="EMBL" id="CM001233">
    <property type="protein sequence ID" value="EHA51744.1"/>
    <property type="status" value="ALT_INIT"/>
    <property type="molecule type" value="Genomic_DNA"/>
</dbReference>
<dbReference type="RefSeq" id="XP_003711551.1">
    <property type="nucleotide sequence ID" value="XM_003711503.1"/>
</dbReference>
<dbReference type="SMR" id="A4RAE9"/>
<dbReference type="FunCoup" id="A4RAE9">
    <property type="interactions" value="397"/>
</dbReference>
<dbReference type="STRING" id="242507.A4RAE9"/>
<dbReference type="MEROPS" id="M24.A09"/>
<dbReference type="GeneID" id="5050362"/>
<dbReference type="KEGG" id="mgr:MGG_13438"/>
<dbReference type="eggNOG" id="KOG2737">
    <property type="taxonomic scope" value="Eukaryota"/>
</dbReference>
<dbReference type="InParanoid" id="A4RAE9"/>
<dbReference type="OrthoDB" id="10261878at2759"/>
<dbReference type="Proteomes" id="UP000009058">
    <property type="component" value="Chromosome 3"/>
</dbReference>
<dbReference type="GO" id="GO:0030145">
    <property type="term" value="F:manganese ion binding"/>
    <property type="evidence" value="ECO:0007669"/>
    <property type="project" value="InterPro"/>
</dbReference>
<dbReference type="GO" id="GO:0070006">
    <property type="term" value="F:metalloaminopeptidase activity"/>
    <property type="evidence" value="ECO:0007669"/>
    <property type="project" value="InterPro"/>
</dbReference>
<dbReference type="GO" id="GO:0006508">
    <property type="term" value="P:proteolysis"/>
    <property type="evidence" value="ECO:0007669"/>
    <property type="project" value="UniProtKB-KW"/>
</dbReference>
<dbReference type="CDD" id="cd01087">
    <property type="entry name" value="Prolidase"/>
    <property type="match status" value="1"/>
</dbReference>
<dbReference type="Gene3D" id="3.90.230.10">
    <property type="entry name" value="Creatinase/methionine aminopeptidase superfamily"/>
    <property type="match status" value="1"/>
</dbReference>
<dbReference type="Gene3D" id="3.40.350.10">
    <property type="entry name" value="Creatinase/prolidase N-terminal domain"/>
    <property type="match status" value="1"/>
</dbReference>
<dbReference type="InterPro" id="IPR007865">
    <property type="entry name" value="Aminopep_P_N"/>
</dbReference>
<dbReference type="InterPro" id="IPR029149">
    <property type="entry name" value="Creatin/AminoP/Spt16_N"/>
</dbReference>
<dbReference type="InterPro" id="IPR036005">
    <property type="entry name" value="Creatinase/aminopeptidase-like"/>
</dbReference>
<dbReference type="InterPro" id="IPR000994">
    <property type="entry name" value="Pept_M24"/>
</dbReference>
<dbReference type="InterPro" id="IPR052433">
    <property type="entry name" value="X-Pro_dipept-like"/>
</dbReference>
<dbReference type="PANTHER" id="PTHR43226">
    <property type="entry name" value="XAA-PRO AMINOPEPTIDASE 3"/>
    <property type="match status" value="1"/>
</dbReference>
<dbReference type="PANTHER" id="PTHR43226:SF1">
    <property type="entry name" value="XAA-PRO DIPEPTIDASE"/>
    <property type="match status" value="1"/>
</dbReference>
<dbReference type="Pfam" id="PF05195">
    <property type="entry name" value="AMP_N"/>
    <property type="match status" value="1"/>
</dbReference>
<dbReference type="Pfam" id="PF00557">
    <property type="entry name" value="Peptidase_M24"/>
    <property type="match status" value="1"/>
</dbReference>
<dbReference type="SMART" id="SM01011">
    <property type="entry name" value="AMP_N"/>
    <property type="match status" value="1"/>
</dbReference>
<dbReference type="SUPFAM" id="SSF55920">
    <property type="entry name" value="Creatinase/aminopeptidase"/>
    <property type="match status" value="1"/>
</dbReference>
<dbReference type="SUPFAM" id="SSF53092">
    <property type="entry name" value="Creatinase/prolidase N-terminal domain"/>
    <property type="match status" value="1"/>
</dbReference>